<keyword id="KW-0175">Coiled coil</keyword>
<keyword id="KW-0256">Endoplasmic reticulum</keyword>
<keyword id="KW-0342">GTP-binding</keyword>
<keyword id="KW-0378">Hydrolase</keyword>
<keyword id="KW-0472">Membrane</keyword>
<keyword id="KW-0547">Nucleotide-binding</keyword>
<keyword id="KW-1185">Reference proteome</keyword>
<keyword id="KW-0812">Transmembrane</keyword>
<keyword id="KW-1133">Transmembrane helix</keyword>
<protein>
    <recommendedName>
        <fullName evidence="1">Protein sey1</fullName>
        <ecNumber evidence="1">3.6.5.-</ecNumber>
    </recommendedName>
</protein>
<proteinExistence type="inferred from homology"/>
<comment type="function">
    <text evidence="1">Cooperates with the reticulon proteins and tubule-shaping DP1 family proteins to generate and maintain the structure of the tubular endoplasmic reticulum network. Has GTPase activity, which is required for its function in ER organization.</text>
</comment>
<comment type="subcellular location">
    <subcellularLocation>
        <location evidence="1">Endoplasmic reticulum membrane</location>
        <topology evidence="1">Multi-pass membrane protein</topology>
    </subcellularLocation>
    <text evidence="1">Enriched in the cortical ER. Concentrated in punctae along the ER tubules.</text>
</comment>
<comment type="similarity">
    <text evidence="2">Belongs to the TRAFAC class dynamin-like GTPase superfamily. GB1/RHD3 GTPase family. RHD3 subfamily.</text>
</comment>
<name>SEY1_NEUCR</name>
<evidence type="ECO:0000255" key="1">
    <source>
        <dbReference type="HAMAP-Rule" id="MF_03109"/>
    </source>
</evidence>
<evidence type="ECO:0000255" key="2">
    <source>
        <dbReference type="PROSITE-ProRule" id="PRU01052"/>
    </source>
</evidence>
<evidence type="ECO:0000256" key="3">
    <source>
        <dbReference type="SAM" id="MobiDB-lite"/>
    </source>
</evidence>
<dbReference type="EC" id="3.6.5.-" evidence="1"/>
<dbReference type="EMBL" id="AL355931">
    <property type="protein sequence ID" value="CAB91394.1"/>
    <property type="molecule type" value="Genomic_DNA"/>
</dbReference>
<dbReference type="EMBL" id="CM002237">
    <property type="protein sequence ID" value="EAA34138.1"/>
    <property type="molecule type" value="Genomic_DNA"/>
</dbReference>
<dbReference type="PIR" id="T49593">
    <property type="entry name" value="T49593"/>
</dbReference>
<dbReference type="RefSeq" id="XP_963374.1">
    <property type="nucleotide sequence ID" value="XM_958281.2"/>
</dbReference>
<dbReference type="SMR" id="Q9P5X6"/>
<dbReference type="FunCoup" id="Q9P5X6">
    <property type="interactions" value="61"/>
</dbReference>
<dbReference type="STRING" id="367110.Q9P5X6"/>
<dbReference type="PaxDb" id="5141-EFNCRP00000009417"/>
<dbReference type="EnsemblFungi" id="EAA34138">
    <property type="protein sequence ID" value="EAA34138"/>
    <property type="gene ID" value="NCU09610"/>
</dbReference>
<dbReference type="GeneID" id="3879530"/>
<dbReference type="KEGG" id="ncr:NCU09610"/>
<dbReference type="VEuPathDB" id="FungiDB:NCU09610"/>
<dbReference type="HOGENOM" id="CLU_011270_0_0_1"/>
<dbReference type="InParanoid" id="Q9P5X6"/>
<dbReference type="OMA" id="PIIKMTE"/>
<dbReference type="OrthoDB" id="1597724at2759"/>
<dbReference type="Proteomes" id="UP000001805">
    <property type="component" value="Chromosome 6, Linkage Group II"/>
</dbReference>
<dbReference type="GO" id="GO:0005783">
    <property type="term" value="C:endoplasmic reticulum"/>
    <property type="evidence" value="ECO:0000318"/>
    <property type="project" value="GO_Central"/>
</dbReference>
<dbReference type="GO" id="GO:0005789">
    <property type="term" value="C:endoplasmic reticulum membrane"/>
    <property type="evidence" value="ECO:0007669"/>
    <property type="project" value="UniProtKB-SubCell"/>
</dbReference>
<dbReference type="GO" id="GO:0005525">
    <property type="term" value="F:GTP binding"/>
    <property type="evidence" value="ECO:0007669"/>
    <property type="project" value="UniProtKB-UniRule"/>
</dbReference>
<dbReference type="GO" id="GO:0003924">
    <property type="term" value="F:GTPase activity"/>
    <property type="evidence" value="ECO:0000318"/>
    <property type="project" value="GO_Central"/>
</dbReference>
<dbReference type="GO" id="GO:0016320">
    <property type="term" value="P:endoplasmic reticulum membrane fusion"/>
    <property type="evidence" value="ECO:0000318"/>
    <property type="project" value="GO_Central"/>
</dbReference>
<dbReference type="CDD" id="cd01851">
    <property type="entry name" value="GBP"/>
    <property type="match status" value="1"/>
</dbReference>
<dbReference type="FunFam" id="3.40.50.300:FF:000727">
    <property type="entry name" value="Protein SEY1 homolog"/>
    <property type="match status" value="1"/>
</dbReference>
<dbReference type="Gene3D" id="3.40.50.300">
    <property type="entry name" value="P-loop containing nucleotide triphosphate hydrolases"/>
    <property type="match status" value="1"/>
</dbReference>
<dbReference type="HAMAP" id="MF_03109">
    <property type="entry name" value="Sey1"/>
    <property type="match status" value="1"/>
</dbReference>
<dbReference type="InterPro" id="IPR030386">
    <property type="entry name" value="G_GB1_RHD3_dom"/>
</dbReference>
<dbReference type="InterPro" id="IPR027417">
    <property type="entry name" value="P-loop_NTPase"/>
</dbReference>
<dbReference type="InterPro" id="IPR008803">
    <property type="entry name" value="RHD3/Sey1"/>
</dbReference>
<dbReference type="InterPro" id="IPR046758">
    <property type="entry name" value="Sey1/RHD3-like_3HB"/>
</dbReference>
<dbReference type="PANTHER" id="PTHR45923">
    <property type="entry name" value="PROTEIN SEY1"/>
    <property type="match status" value="1"/>
</dbReference>
<dbReference type="PANTHER" id="PTHR45923:SF2">
    <property type="entry name" value="PROTEIN SEY1"/>
    <property type="match status" value="1"/>
</dbReference>
<dbReference type="Pfam" id="PF05879">
    <property type="entry name" value="RHD3_GTPase"/>
    <property type="match status" value="1"/>
</dbReference>
<dbReference type="Pfam" id="PF20428">
    <property type="entry name" value="Sey1_3HB"/>
    <property type="match status" value="1"/>
</dbReference>
<dbReference type="SUPFAM" id="SSF52540">
    <property type="entry name" value="P-loop containing nucleoside triphosphate hydrolases"/>
    <property type="match status" value="1"/>
</dbReference>
<dbReference type="PROSITE" id="PS51715">
    <property type="entry name" value="G_GB1_RHD3"/>
    <property type="match status" value="1"/>
</dbReference>
<gene>
    <name type="primary">sey1</name>
    <name type="ORF">B3E4.060</name>
    <name type="ORF">NCU09610</name>
</gene>
<accession>Q9P5X6</accession>
<accession>Q1K8N0</accession>
<feature type="chain" id="PRO_0000155136" description="Protein sey1">
    <location>
        <begin position="1"/>
        <end position="862"/>
    </location>
</feature>
<feature type="topological domain" description="Cytoplasmic" evidence="1">
    <location>
        <begin position="1"/>
        <end position="744"/>
    </location>
</feature>
<feature type="transmembrane region" description="Helical" evidence="1">
    <location>
        <begin position="745"/>
        <end position="765"/>
    </location>
</feature>
<feature type="topological domain" description="Lumenal" evidence="1">
    <location>
        <begin position="766"/>
        <end position="768"/>
    </location>
</feature>
<feature type="transmembrane region" description="Helical" evidence="1">
    <location>
        <begin position="769"/>
        <end position="789"/>
    </location>
</feature>
<feature type="topological domain" description="Cytoplasmic" evidence="1">
    <location>
        <begin position="790"/>
        <end position="862"/>
    </location>
</feature>
<feature type="domain" description="GB1/RHD3-type G" evidence="2">
    <location>
        <begin position="53"/>
        <end position="288"/>
    </location>
</feature>
<feature type="region of interest" description="Disordered" evidence="3">
    <location>
        <begin position="1"/>
        <end position="21"/>
    </location>
</feature>
<feature type="region of interest" description="Disordered" evidence="3">
    <location>
        <begin position="840"/>
        <end position="862"/>
    </location>
</feature>
<feature type="coiled-coil region" evidence="1">
    <location>
        <begin position="485"/>
        <end position="506"/>
    </location>
</feature>
<feature type="compositionally biased region" description="Polar residues" evidence="3">
    <location>
        <begin position="11"/>
        <end position="21"/>
    </location>
</feature>
<feature type="binding site" evidence="1">
    <location>
        <begin position="63"/>
        <end position="70"/>
    </location>
    <ligand>
        <name>GTP</name>
        <dbReference type="ChEBI" id="CHEBI:37565"/>
    </ligand>
</feature>
<organism>
    <name type="scientific">Neurospora crassa (strain ATCC 24698 / 74-OR23-1A / CBS 708.71 / DSM 1257 / FGSC 987)</name>
    <dbReference type="NCBI Taxonomy" id="367110"/>
    <lineage>
        <taxon>Eukaryota</taxon>
        <taxon>Fungi</taxon>
        <taxon>Dikarya</taxon>
        <taxon>Ascomycota</taxon>
        <taxon>Pezizomycotina</taxon>
        <taxon>Sordariomycetes</taxon>
        <taxon>Sordariomycetidae</taxon>
        <taxon>Sordariales</taxon>
        <taxon>Sordariaceae</taxon>
        <taxon>Neurospora</taxon>
    </lineage>
</organism>
<sequence length="862" mass="96417">MNGHFAAVDNGNGSSPDSNAHSFEHGIQVINEDKQYNTNLNEYLNETHVAEAGFNYHLISVFGSQSTGKSTLLNHLFGTQFSVMSERERRQTTKGIWMSKNKNEGKMADNILVMDVEGTDGRERGEDQDFERKSALFALATSEVLIVNIWEHQVGLYQGANMGLLKTVFEVNMQLFLKDKQNQTRSLLFFVIRDHIGVTPLANLRNTLIQDLTHIWSSISKPAGLENSKIEDYFDFAFAALPHKILQPDKFISEVQNLGSRFIAGHRNKDSDATDDQELTGGVFLPEYHRRIPADGLSIYAEGIWDQIVSNKDLDLPTQQELLAQFRCDEIAREVQIAFDAAIAPLEEQQAESTRAGKPAVLPNLGQIGAEAREKCVKNFETQASRYHKGVYTTKRAELEDKIDNRLKALYQAHLTAAHKAGVTAFSEAVANAVKAGQKAGGAYEFAEIVEKQKTKTLEIFKKEAQSLAIPGVAWSNFKPQYLIFEKELDEVSARLRKEEMRRLAIRVERWVKSRLGDAIGLEFNKLGSGRGGSGAPESGEKPATEKDIWDRVWKAFISIVGEAESRFTDRAKSFEASDDEVQVGLWRLRRKSWVALREKIEEEVMESNILMKLRENFEDKFRYDEDGVPRIWRPSDDIEGIYTRARESTLGLVPLLSRFRLTSTSAPPDLIEFVGPQPHGVEPGDEEDLTPIGGVDEDEGKSLEEETTILSEPKKQDLVVRFKKMADGVYVEAKRSAIGGITQVPLYFYAVLLVLGWNEFVMVLRNPILFLLLLLISGGTYVAYSLNLLGPMMQMANAASTQGMEIGKAKLRDFLENHEGARGALGMPPKNAQRVESGISMDTLDSNGKRKETGLGAEDDI</sequence>
<reference key="1">
    <citation type="journal article" date="2003" name="Nucleic Acids Res.">
        <title>What's in the genome of a filamentous fungus? Analysis of the Neurospora genome sequence.</title>
        <authorList>
            <person name="Mannhaupt G."/>
            <person name="Montrone C."/>
            <person name="Haase D."/>
            <person name="Mewes H.-W."/>
            <person name="Aign V."/>
            <person name="Hoheisel J.D."/>
            <person name="Fartmann B."/>
            <person name="Nyakatura G."/>
            <person name="Kempken F."/>
            <person name="Maier J."/>
            <person name="Schulte U."/>
        </authorList>
    </citation>
    <scope>NUCLEOTIDE SEQUENCE [LARGE SCALE GENOMIC DNA]</scope>
    <source>
        <strain>ATCC 24698 / 74-OR23-1A / CBS 708.71 / DSM 1257 / FGSC 987</strain>
    </source>
</reference>
<reference key="2">
    <citation type="journal article" date="2003" name="Nature">
        <title>The genome sequence of the filamentous fungus Neurospora crassa.</title>
        <authorList>
            <person name="Galagan J.E."/>
            <person name="Calvo S.E."/>
            <person name="Borkovich K.A."/>
            <person name="Selker E.U."/>
            <person name="Read N.D."/>
            <person name="Jaffe D.B."/>
            <person name="FitzHugh W."/>
            <person name="Ma L.-J."/>
            <person name="Smirnov S."/>
            <person name="Purcell S."/>
            <person name="Rehman B."/>
            <person name="Elkins T."/>
            <person name="Engels R."/>
            <person name="Wang S."/>
            <person name="Nielsen C.B."/>
            <person name="Butler J."/>
            <person name="Endrizzi M."/>
            <person name="Qui D."/>
            <person name="Ianakiev P."/>
            <person name="Bell-Pedersen D."/>
            <person name="Nelson M.A."/>
            <person name="Werner-Washburne M."/>
            <person name="Selitrennikoff C.P."/>
            <person name="Kinsey J.A."/>
            <person name="Braun E.L."/>
            <person name="Zelter A."/>
            <person name="Schulte U."/>
            <person name="Kothe G.O."/>
            <person name="Jedd G."/>
            <person name="Mewes H.-W."/>
            <person name="Staben C."/>
            <person name="Marcotte E."/>
            <person name="Greenberg D."/>
            <person name="Roy A."/>
            <person name="Foley K."/>
            <person name="Naylor J."/>
            <person name="Stange-Thomann N."/>
            <person name="Barrett R."/>
            <person name="Gnerre S."/>
            <person name="Kamal M."/>
            <person name="Kamvysselis M."/>
            <person name="Mauceli E.W."/>
            <person name="Bielke C."/>
            <person name="Rudd S."/>
            <person name="Frishman D."/>
            <person name="Krystofova S."/>
            <person name="Rasmussen C."/>
            <person name="Metzenberg R.L."/>
            <person name="Perkins D.D."/>
            <person name="Kroken S."/>
            <person name="Cogoni C."/>
            <person name="Macino G."/>
            <person name="Catcheside D.E.A."/>
            <person name="Li W."/>
            <person name="Pratt R.J."/>
            <person name="Osmani S.A."/>
            <person name="DeSouza C.P.C."/>
            <person name="Glass N.L."/>
            <person name="Orbach M.J."/>
            <person name="Berglund J.A."/>
            <person name="Voelker R."/>
            <person name="Yarden O."/>
            <person name="Plamann M."/>
            <person name="Seiler S."/>
            <person name="Dunlap J.C."/>
            <person name="Radford A."/>
            <person name="Aramayo R."/>
            <person name="Natvig D.O."/>
            <person name="Alex L.A."/>
            <person name="Mannhaupt G."/>
            <person name="Ebbole D.J."/>
            <person name="Freitag M."/>
            <person name="Paulsen I."/>
            <person name="Sachs M.S."/>
            <person name="Lander E.S."/>
            <person name="Nusbaum C."/>
            <person name="Birren B.W."/>
        </authorList>
    </citation>
    <scope>NUCLEOTIDE SEQUENCE [LARGE SCALE GENOMIC DNA]</scope>
    <source>
        <strain>ATCC 24698 / 74-OR23-1A / CBS 708.71 / DSM 1257 / FGSC 987</strain>
    </source>
</reference>